<gene>
    <name evidence="1" type="primary">rplC</name>
    <name type="ordered locus">VC0395_A2174</name>
    <name type="ordered locus">VC395_2709</name>
</gene>
<comment type="function">
    <text evidence="1">One of the primary rRNA binding proteins, it binds directly near the 3'-end of the 23S rRNA, where it nucleates assembly of the 50S subunit.</text>
</comment>
<comment type="subunit">
    <text evidence="1">Part of the 50S ribosomal subunit. Forms a cluster with proteins L14 and L19.</text>
</comment>
<comment type="PTM">
    <text evidence="1">Methylated by PrmB.</text>
</comment>
<comment type="similarity">
    <text evidence="1">Belongs to the universal ribosomal protein uL3 family.</text>
</comment>
<feature type="chain" id="PRO_1000073256" description="Large ribosomal subunit protein uL3">
    <location>
        <begin position="1"/>
        <end position="209"/>
    </location>
</feature>
<feature type="modified residue" description="N5-methylglutamine" evidence="1">
    <location>
        <position position="150"/>
    </location>
</feature>
<reference key="1">
    <citation type="submission" date="2007-03" db="EMBL/GenBank/DDBJ databases">
        <authorList>
            <person name="Heidelberg J."/>
        </authorList>
    </citation>
    <scope>NUCLEOTIDE SEQUENCE [LARGE SCALE GENOMIC DNA]</scope>
    <source>
        <strain>ATCC 39541 / Classical Ogawa 395 / O395</strain>
    </source>
</reference>
<reference key="2">
    <citation type="journal article" date="2008" name="PLoS ONE">
        <title>A recalibrated molecular clock and independent origins for the cholera pandemic clones.</title>
        <authorList>
            <person name="Feng L."/>
            <person name="Reeves P.R."/>
            <person name="Lan R."/>
            <person name="Ren Y."/>
            <person name="Gao C."/>
            <person name="Zhou Z."/>
            <person name="Ren Y."/>
            <person name="Cheng J."/>
            <person name="Wang W."/>
            <person name="Wang J."/>
            <person name="Qian W."/>
            <person name="Li D."/>
            <person name="Wang L."/>
        </authorList>
    </citation>
    <scope>NUCLEOTIDE SEQUENCE [LARGE SCALE GENOMIC DNA]</scope>
    <source>
        <strain>ATCC 39541 / Classical Ogawa 395 / O395</strain>
    </source>
</reference>
<name>RL3_VIBC3</name>
<organism>
    <name type="scientific">Vibrio cholerae serotype O1 (strain ATCC 39541 / Classical Ogawa 395 / O395)</name>
    <dbReference type="NCBI Taxonomy" id="345073"/>
    <lineage>
        <taxon>Bacteria</taxon>
        <taxon>Pseudomonadati</taxon>
        <taxon>Pseudomonadota</taxon>
        <taxon>Gammaproteobacteria</taxon>
        <taxon>Vibrionales</taxon>
        <taxon>Vibrionaceae</taxon>
        <taxon>Vibrio</taxon>
    </lineage>
</organism>
<keyword id="KW-0488">Methylation</keyword>
<keyword id="KW-0687">Ribonucleoprotein</keyword>
<keyword id="KW-0689">Ribosomal protein</keyword>
<keyword id="KW-0694">RNA-binding</keyword>
<keyword id="KW-0699">rRNA-binding</keyword>
<sequence>MIGLIGRKVGMTRVFTEDGVSIPVTVVEVEANRVSQVKTLETDGYAAIQVTTGSKKANRVTKPEAGHFAKAGVEAGRGLWEFRLENGEEFAVGSELTVELFNEVKKVDVTGTSKGKGFQGAVKRWNFRTQDMTHGNSLSHRAPGSIGQCQTPGRVFKGKKMAGHMGAERVTTQNLEIVRVDAERNLLLIKGAVPGATGGNVIVKPAVKA</sequence>
<dbReference type="EMBL" id="CP000627">
    <property type="protein sequence ID" value="ABQ20122.1"/>
    <property type="molecule type" value="Genomic_DNA"/>
</dbReference>
<dbReference type="EMBL" id="CP001235">
    <property type="protein sequence ID" value="ACP10695.1"/>
    <property type="molecule type" value="Genomic_DNA"/>
</dbReference>
<dbReference type="RefSeq" id="WP_000579663.1">
    <property type="nucleotide sequence ID" value="NZ_JAACZH010000007.1"/>
</dbReference>
<dbReference type="SMR" id="A5F549"/>
<dbReference type="GeneID" id="69718800"/>
<dbReference type="KEGG" id="vco:VC0395_A2174"/>
<dbReference type="KEGG" id="vcr:VC395_2709"/>
<dbReference type="PATRIC" id="fig|345073.21.peg.2609"/>
<dbReference type="eggNOG" id="COG0087">
    <property type="taxonomic scope" value="Bacteria"/>
</dbReference>
<dbReference type="HOGENOM" id="CLU_044142_4_1_6"/>
<dbReference type="OrthoDB" id="9806135at2"/>
<dbReference type="Proteomes" id="UP000000249">
    <property type="component" value="Chromosome 2"/>
</dbReference>
<dbReference type="GO" id="GO:0022625">
    <property type="term" value="C:cytosolic large ribosomal subunit"/>
    <property type="evidence" value="ECO:0007669"/>
    <property type="project" value="TreeGrafter"/>
</dbReference>
<dbReference type="GO" id="GO:0019843">
    <property type="term" value="F:rRNA binding"/>
    <property type="evidence" value="ECO:0007669"/>
    <property type="project" value="UniProtKB-UniRule"/>
</dbReference>
<dbReference type="GO" id="GO:0003735">
    <property type="term" value="F:structural constituent of ribosome"/>
    <property type="evidence" value="ECO:0007669"/>
    <property type="project" value="InterPro"/>
</dbReference>
<dbReference type="GO" id="GO:0006412">
    <property type="term" value="P:translation"/>
    <property type="evidence" value="ECO:0007669"/>
    <property type="project" value="UniProtKB-UniRule"/>
</dbReference>
<dbReference type="FunFam" id="2.40.30.10:FF:000004">
    <property type="entry name" value="50S ribosomal protein L3"/>
    <property type="match status" value="1"/>
</dbReference>
<dbReference type="FunFam" id="3.30.160.810:FF:000001">
    <property type="entry name" value="50S ribosomal protein L3"/>
    <property type="match status" value="1"/>
</dbReference>
<dbReference type="Gene3D" id="3.30.160.810">
    <property type="match status" value="1"/>
</dbReference>
<dbReference type="Gene3D" id="2.40.30.10">
    <property type="entry name" value="Translation factors"/>
    <property type="match status" value="1"/>
</dbReference>
<dbReference type="HAMAP" id="MF_01325_B">
    <property type="entry name" value="Ribosomal_uL3_B"/>
    <property type="match status" value="1"/>
</dbReference>
<dbReference type="InterPro" id="IPR000597">
    <property type="entry name" value="Ribosomal_uL3"/>
</dbReference>
<dbReference type="InterPro" id="IPR019927">
    <property type="entry name" value="Ribosomal_uL3_bac/org-type"/>
</dbReference>
<dbReference type="InterPro" id="IPR019926">
    <property type="entry name" value="Ribosomal_uL3_CS"/>
</dbReference>
<dbReference type="InterPro" id="IPR009000">
    <property type="entry name" value="Transl_B-barrel_sf"/>
</dbReference>
<dbReference type="NCBIfam" id="TIGR03625">
    <property type="entry name" value="L3_bact"/>
    <property type="match status" value="1"/>
</dbReference>
<dbReference type="PANTHER" id="PTHR11229">
    <property type="entry name" value="50S RIBOSOMAL PROTEIN L3"/>
    <property type="match status" value="1"/>
</dbReference>
<dbReference type="PANTHER" id="PTHR11229:SF16">
    <property type="entry name" value="LARGE RIBOSOMAL SUBUNIT PROTEIN UL3C"/>
    <property type="match status" value="1"/>
</dbReference>
<dbReference type="Pfam" id="PF00297">
    <property type="entry name" value="Ribosomal_L3"/>
    <property type="match status" value="1"/>
</dbReference>
<dbReference type="SUPFAM" id="SSF50447">
    <property type="entry name" value="Translation proteins"/>
    <property type="match status" value="1"/>
</dbReference>
<dbReference type="PROSITE" id="PS00474">
    <property type="entry name" value="RIBOSOMAL_L3"/>
    <property type="match status" value="1"/>
</dbReference>
<protein>
    <recommendedName>
        <fullName evidence="1">Large ribosomal subunit protein uL3</fullName>
    </recommendedName>
    <alternativeName>
        <fullName evidence="2">50S ribosomal protein L3</fullName>
    </alternativeName>
</protein>
<evidence type="ECO:0000255" key="1">
    <source>
        <dbReference type="HAMAP-Rule" id="MF_01325"/>
    </source>
</evidence>
<evidence type="ECO:0000305" key="2"/>
<proteinExistence type="inferred from homology"/>
<accession>A5F549</accession>
<accession>C3LXJ5</accession>